<name>FABH_STRMU</name>
<dbReference type="EC" id="2.3.1.180" evidence="1"/>
<dbReference type="EMBL" id="AE014133">
    <property type="protein sequence ID" value="AAN59377.1"/>
    <property type="molecule type" value="Genomic_DNA"/>
</dbReference>
<dbReference type="RefSeq" id="NP_722071.1">
    <property type="nucleotide sequence ID" value="NC_004350.2"/>
</dbReference>
<dbReference type="RefSeq" id="WP_002262532.1">
    <property type="nucleotide sequence ID" value="NC_004350.2"/>
</dbReference>
<dbReference type="SMR" id="Q8DSN2"/>
<dbReference type="STRING" id="210007.SMU_1744"/>
<dbReference type="KEGG" id="smu:SMU_1744"/>
<dbReference type="PATRIC" id="fig|210007.7.peg.1560"/>
<dbReference type="eggNOG" id="COG0332">
    <property type="taxonomic scope" value="Bacteria"/>
</dbReference>
<dbReference type="HOGENOM" id="CLU_039592_4_1_9"/>
<dbReference type="OrthoDB" id="9815506at2"/>
<dbReference type="PhylomeDB" id="Q8DSN2"/>
<dbReference type="UniPathway" id="UPA00094"/>
<dbReference type="Proteomes" id="UP000002512">
    <property type="component" value="Chromosome"/>
</dbReference>
<dbReference type="GO" id="GO:0005737">
    <property type="term" value="C:cytoplasm"/>
    <property type="evidence" value="ECO:0007669"/>
    <property type="project" value="UniProtKB-SubCell"/>
</dbReference>
<dbReference type="GO" id="GO:0004315">
    <property type="term" value="F:3-oxoacyl-[acyl-carrier-protein] synthase activity"/>
    <property type="evidence" value="ECO:0007669"/>
    <property type="project" value="InterPro"/>
</dbReference>
<dbReference type="GO" id="GO:0033818">
    <property type="term" value="F:beta-ketoacyl-acyl-carrier-protein synthase III activity"/>
    <property type="evidence" value="ECO:0007669"/>
    <property type="project" value="UniProtKB-UniRule"/>
</dbReference>
<dbReference type="GO" id="GO:0006633">
    <property type="term" value="P:fatty acid biosynthetic process"/>
    <property type="evidence" value="ECO:0007669"/>
    <property type="project" value="UniProtKB-UniRule"/>
</dbReference>
<dbReference type="CDD" id="cd00830">
    <property type="entry name" value="KAS_III"/>
    <property type="match status" value="1"/>
</dbReference>
<dbReference type="FunFam" id="3.40.47.10:FF:000004">
    <property type="entry name" value="3-oxoacyl-[acyl-carrier-protein] synthase 3"/>
    <property type="match status" value="1"/>
</dbReference>
<dbReference type="Gene3D" id="3.40.47.10">
    <property type="match status" value="1"/>
</dbReference>
<dbReference type="HAMAP" id="MF_01815">
    <property type="entry name" value="FabH"/>
    <property type="match status" value="1"/>
</dbReference>
<dbReference type="InterPro" id="IPR013747">
    <property type="entry name" value="ACP_syn_III_C"/>
</dbReference>
<dbReference type="InterPro" id="IPR013751">
    <property type="entry name" value="ACP_syn_III_N"/>
</dbReference>
<dbReference type="InterPro" id="IPR004655">
    <property type="entry name" value="FabH"/>
</dbReference>
<dbReference type="InterPro" id="IPR016039">
    <property type="entry name" value="Thiolase-like"/>
</dbReference>
<dbReference type="NCBIfam" id="TIGR00747">
    <property type="entry name" value="fabH"/>
    <property type="match status" value="1"/>
</dbReference>
<dbReference type="NCBIfam" id="NF006829">
    <property type="entry name" value="PRK09352.1"/>
    <property type="match status" value="1"/>
</dbReference>
<dbReference type="PANTHER" id="PTHR43091">
    <property type="entry name" value="3-OXOACYL-[ACYL-CARRIER-PROTEIN] SYNTHASE"/>
    <property type="match status" value="1"/>
</dbReference>
<dbReference type="PANTHER" id="PTHR43091:SF1">
    <property type="entry name" value="BETA-KETOACYL-[ACYL-CARRIER-PROTEIN] SYNTHASE III, CHLOROPLASTIC"/>
    <property type="match status" value="1"/>
</dbReference>
<dbReference type="Pfam" id="PF08545">
    <property type="entry name" value="ACP_syn_III"/>
    <property type="match status" value="1"/>
</dbReference>
<dbReference type="Pfam" id="PF08541">
    <property type="entry name" value="ACP_syn_III_C"/>
    <property type="match status" value="1"/>
</dbReference>
<dbReference type="SUPFAM" id="SSF53901">
    <property type="entry name" value="Thiolase-like"/>
    <property type="match status" value="1"/>
</dbReference>
<proteinExistence type="inferred from homology"/>
<reference key="1">
    <citation type="journal article" date="2002" name="Proc. Natl. Acad. Sci. U.S.A.">
        <title>Genome sequence of Streptococcus mutans UA159, a cariogenic dental pathogen.</title>
        <authorList>
            <person name="Ajdic D.J."/>
            <person name="McShan W.M."/>
            <person name="McLaughlin R.E."/>
            <person name="Savic G."/>
            <person name="Chang J."/>
            <person name="Carson M.B."/>
            <person name="Primeaux C."/>
            <person name="Tian R."/>
            <person name="Kenton S."/>
            <person name="Jia H.G."/>
            <person name="Lin S.P."/>
            <person name="Qian Y."/>
            <person name="Li S."/>
            <person name="Zhu H."/>
            <person name="Najar F.Z."/>
            <person name="Lai H."/>
            <person name="White J."/>
            <person name="Roe B.A."/>
            <person name="Ferretti J.J."/>
        </authorList>
    </citation>
    <scope>NUCLEOTIDE SEQUENCE [LARGE SCALE GENOMIC DNA]</scope>
    <source>
        <strain>ATCC 700610 / UA159</strain>
    </source>
</reference>
<evidence type="ECO:0000255" key="1">
    <source>
        <dbReference type="HAMAP-Rule" id="MF_01815"/>
    </source>
</evidence>
<gene>
    <name evidence="1" type="primary">fabH</name>
    <name type="ordered locus">SMU_1744</name>
</gene>
<organism>
    <name type="scientific">Streptococcus mutans serotype c (strain ATCC 700610 / UA159)</name>
    <dbReference type="NCBI Taxonomy" id="210007"/>
    <lineage>
        <taxon>Bacteria</taxon>
        <taxon>Bacillati</taxon>
        <taxon>Bacillota</taxon>
        <taxon>Bacilli</taxon>
        <taxon>Lactobacillales</taxon>
        <taxon>Streptococcaceae</taxon>
        <taxon>Streptococcus</taxon>
    </lineage>
</organism>
<accession>Q8DSN2</accession>
<feature type="chain" id="PRO_0000110490" description="Beta-ketoacyl-[acyl-carrier-protein] synthase III">
    <location>
        <begin position="1"/>
        <end position="325"/>
    </location>
</feature>
<feature type="region of interest" description="ACP-binding" evidence="1">
    <location>
        <begin position="251"/>
        <end position="255"/>
    </location>
</feature>
<feature type="active site" evidence="1">
    <location>
        <position position="112"/>
    </location>
</feature>
<feature type="active site" evidence="1">
    <location>
        <position position="250"/>
    </location>
</feature>
<feature type="active site" evidence="1">
    <location>
        <position position="280"/>
    </location>
</feature>
<sequence>MTFAKISQAAYYVPSQVVTNDDLSKIMDTSDEWITSRTGIRERRISQSEDTSDLASQVAKELLKKASLKAKEIDFIIVATITPDAMMPSTAACVQAKIGAVNAFAFDLTAACSGFIFALSAAEKMIKSGQYQKGLVIGAEVLSKIIDWSDRTTAVLFGDGAGGVLLEADSSEHFLFESIHSDGSRGESLTSGEHAVSSPFSQVDKKDNCFLKMDGRAIFDFAIRDVSKSISMLIRKSDMPVEAIDYFLLHQANIRILDKMAKKIGADREKFPANMMKYGNTSAASIPILLAECVENGTIELNGSHTVLLSGFGGGLTWGSLIVKI</sequence>
<keyword id="KW-0012">Acyltransferase</keyword>
<keyword id="KW-0963">Cytoplasm</keyword>
<keyword id="KW-0275">Fatty acid biosynthesis</keyword>
<keyword id="KW-0276">Fatty acid metabolism</keyword>
<keyword id="KW-0444">Lipid biosynthesis</keyword>
<keyword id="KW-0443">Lipid metabolism</keyword>
<keyword id="KW-0511">Multifunctional enzyme</keyword>
<keyword id="KW-1185">Reference proteome</keyword>
<keyword id="KW-0808">Transferase</keyword>
<protein>
    <recommendedName>
        <fullName evidence="1">Beta-ketoacyl-[acyl-carrier-protein] synthase III</fullName>
        <shortName evidence="1">Beta-ketoacyl-ACP synthase III</shortName>
        <shortName evidence="1">KAS III</shortName>
        <ecNumber evidence="1">2.3.1.180</ecNumber>
    </recommendedName>
    <alternativeName>
        <fullName evidence="1">3-oxoacyl-[acyl-carrier-protein] synthase 3</fullName>
    </alternativeName>
    <alternativeName>
        <fullName evidence="1">3-oxoacyl-[acyl-carrier-protein] synthase III</fullName>
    </alternativeName>
</protein>
<comment type="function">
    <text evidence="1">Catalyzes the condensation reaction of fatty acid synthesis by the addition to an acyl acceptor of two carbons from malonyl-ACP. Catalyzes the first condensation reaction which initiates fatty acid synthesis and may therefore play a role in governing the total rate of fatty acid production. Possesses both acetoacetyl-ACP synthase and acetyl transacylase activities. Its substrate specificity determines the biosynthesis of branched-chain and/or straight-chain of fatty acids.</text>
</comment>
<comment type="catalytic activity">
    <reaction evidence="1">
        <text>malonyl-[ACP] + acetyl-CoA + H(+) = 3-oxobutanoyl-[ACP] + CO2 + CoA</text>
        <dbReference type="Rhea" id="RHEA:12080"/>
        <dbReference type="Rhea" id="RHEA-COMP:9623"/>
        <dbReference type="Rhea" id="RHEA-COMP:9625"/>
        <dbReference type="ChEBI" id="CHEBI:15378"/>
        <dbReference type="ChEBI" id="CHEBI:16526"/>
        <dbReference type="ChEBI" id="CHEBI:57287"/>
        <dbReference type="ChEBI" id="CHEBI:57288"/>
        <dbReference type="ChEBI" id="CHEBI:78449"/>
        <dbReference type="ChEBI" id="CHEBI:78450"/>
        <dbReference type="EC" id="2.3.1.180"/>
    </reaction>
</comment>
<comment type="pathway">
    <text evidence="1">Lipid metabolism; fatty acid biosynthesis.</text>
</comment>
<comment type="subunit">
    <text evidence="1">Homodimer.</text>
</comment>
<comment type="subcellular location">
    <subcellularLocation>
        <location evidence="1">Cytoplasm</location>
    </subcellularLocation>
</comment>
<comment type="domain">
    <text evidence="1">The last Arg residue of the ACP-binding site is essential for the weak association between ACP/AcpP and FabH.</text>
</comment>
<comment type="similarity">
    <text evidence="1">Belongs to the thiolase-like superfamily. FabH family.</text>
</comment>